<organism>
    <name type="scientific">Sus scrofa</name>
    <name type="common">Pig</name>
    <dbReference type="NCBI Taxonomy" id="9823"/>
    <lineage>
        <taxon>Eukaryota</taxon>
        <taxon>Metazoa</taxon>
        <taxon>Chordata</taxon>
        <taxon>Craniata</taxon>
        <taxon>Vertebrata</taxon>
        <taxon>Euteleostomi</taxon>
        <taxon>Mammalia</taxon>
        <taxon>Eutheria</taxon>
        <taxon>Laurasiatheria</taxon>
        <taxon>Artiodactyla</taxon>
        <taxon>Suina</taxon>
        <taxon>Suidae</taxon>
        <taxon>Sus</taxon>
    </lineage>
</organism>
<evidence type="ECO:0000250" key="1"/>
<evidence type="ECO:0000250" key="2">
    <source>
        <dbReference type="UniProtKB" id="Q14697"/>
    </source>
</evidence>
<evidence type="ECO:0000250" key="3">
    <source>
        <dbReference type="UniProtKB" id="Q8BHN3"/>
    </source>
</evidence>
<evidence type="ECO:0000255" key="4"/>
<evidence type="ECO:0000255" key="5">
    <source>
        <dbReference type="PROSITE-ProRule" id="PRU10066"/>
    </source>
</evidence>
<evidence type="ECO:0000256" key="6">
    <source>
        <dbReference type="SAM" id="MobiDB-lite"/>
    </source>
</evidence>
<evidence type="ECO:0000269" key="7">
    <source>
    </source>
</evidence>
<evidence type="ECO:0000305" key="8"/>
<proteinExistence type="evidence at protein level"/>
<comment type="function">
    <text evidence="2 3">Catalytic subunit of glucosidase II that cleaves sequentially the 2 innermost alpha-1,3-linked glucose residues from the Glc(2)Man(9)GlcNAc(2) oligosaccharide precursor of immature glycoproteins. Required for PKD1/Polycystin-1 and PKD2/Polycystin-2 maturation and localization to the cell surface and cilia.</text>
</comment>
<comment type="catalytic activity">
    <reaction evidence="3">
        <text>N(4)-(alpha-D-Glc-(1-&gt;3)-alpha-D-Man-(1-&gt;2)-alpha-D-Man-(1-&gt;2)-alpha-D-Man-(1-&gt;3)-[alpha-D-Man-(1-&gt;2)-alpha-D-Man-(1-&gt;3)-[alpha-D-Man-(1-&gt;2)-alpha-D-Man-(1-&gt;6)]-alpha-D-Man-(1-&gt;6)]-beta-D-Man-(1-&gt;4)-beta-D-GlcNAc-(1-&gt;4)-beta-D-GlcNAc)-L-asparaginyl-[protein] + H2O = N(4)-(alpha-D-Man-(1-&gt;2)-alpha-D-Man-(1-&gt;2)-alpha-D-Man-(1-&gt;3)-[alpha-D-Man-(1-&gt;2)-alpha-D-Man-(1-&gt;3)-[alpha-D-Man-(1-&gt;2)-alpha-D-Man-(1-&gt;6)]-alpha-D-Man-(1-&gt;6)]-beta-D-Man-(1-&gt;4)-beta-D-GlcNAc-(1-&gt;4)-beta-D-GlcNAc)-L-asparaginyl-[protein] (N-glucan mannose isomer 9A1,2,3B1,2,3) + beta-D-glucose</text>
        <dbReference type="Rhea" id="RHEA:56000"/>
        <dbReference type="Rhea" id="RHEA-COMP:14356"/>
        <dbReference type="Rhea" id="RHEA-COMP:14357"/>
        <dbReference type="ChEBI" id="CHEBI:15377"/>
        <dbReference type="ChEBI" id="CHEBI:15903"/>
        <dbReference type="ChEBI" id="CHEBI:59080"/>
        <dbReference type="ChEBI" id="CHEBI:139493"/>
        <dbReference type="EC" id="3.2.1.207"/>
    </reaction>
</comment>
<comment type="catalytic activity">
    <reaction evidence="3">
        <text>N(4)-(alpha-D-Glc-(1-&gt;3)-alpha-D-Glc-(1-&gt;3)-alpha-D-Man-(1-&gt;2)-alpha-D-Man-(1-&gt;2)-alpha-D-Man-(1-&gt;3)-[alpha-D-Man-(1-&gt;2)-alpha-D-Man-(1-&gt;3)-[alpha-D-Man-(1-&gt;2)-alpha-D-Man-(1-&gt;6)]-alpha-D-Man-(1-&gt;6)]-beta-D-Man-(1-&gt;4)-beta-D-GlcNAc-(1-&gt;4)-beta-D-GlcNAc)-L-asparaginyl-[protein] + H2O = N(4)-(alpha-D-Glc-(1-&gt;3)-alpha-D-Man-(1-&gt;2)-alpha-D-Man-(1-&gt;2)-alpha-D-Man-(1-&gt;3)-[alpha-D-Man-(1-&gt;2)-alpha-D-Man-(1-&gt;3)-[alpha-D-Man-(1-&gt;2)-alpha-D-Man-(1-&gt;6)]-alpha-D-Man-(1-&gt;6)]-beta-D-Man-(1-&gt;4)-beta-D-GlcNAc-(1-&gt;4)-beta-D-GlcNAc)-L-asparaginyl-[protein] + beta-D-glucose</text>
        <dbReference type="Rhea" id="RHEA:55996"/>
        <dbReference type="Rhea" id="RHEA-COMP:14355"/>
        <dbReference type="Rhea" id="RHEA-COMP:14357"/>
        <dbReference type="ChEBI" id="CHEBI:15377"/>
        <dbReference type="ChEBI" id="CHEBI:15903"/>
        <dbReference type="ChEBI" id="CHEBI:59080"/>
        <dbReference type="ChEBI" id="CHEBI:59082"/>
        <dbReference type="EC" id="3.2.1.207"/>
    </reaction>
</comment>
<comment type="pathway">
    <text evidence="3">Glycan metabolism; N-glycan metabolism.</text>
</comment>
<comment type="subunit">
    <text evidence="3">Heterodimer of a catalytic alpha subunit (GANAB) and a beta subunit (PRKCSH). Binds glycosylated PTPRC.</text>
</comment>
<comment type="subcellular location">
    <subcellularLocation>
        <location evidence="7">Endoplasmic reticulum</location>
    </subcellularLocation>
    <subcellularLocation>
        <location evidence="7">Golgi apparatus</location>
    </subcellularLocation>
    <subcellularLocation>
        <location evidence="2">Melanosome</location>
    </subcellularLocation>
</comment>
<comment type="PTM">
    <text>Contains sialylated polysaccharide chains.</text>
</comment>
<comment type="similarity">
    <text evidence="8">Belongs to the glycosyl hydrolase 31 family.</text>
</comment>
<keyword id="KW-1015">Disulfide bond</keyword>
<keyword id="KW-0256">Endoplasmic reticulum</keyword>
<keyword id="KW-0325">Glycoprotein</keyword>
<keyword id="KW-0326">Glycosidase</keyword>
<keyword id="KW-0333">Golgi apparatus</keyword>
<keyword id="KW-0378">Hydrolase</keyword>
<keyword id="KW-0597">Phosphoprotein</keyword>
<keyword id="KW-1185">Reference proteome</keyword>
<keyword id="KW-0732">Signal</keyword>
<name>GANAB_PIG</name>
<dbReference type="EC" id="3.2.1.207" evidence="3"/>
<dbReference type="EMBL" id="U71273">
    <property type="protein sequence ID" value="AAB49757.1"/>
    <property type="molecule type" value="mRNA"/>
</dbReference>
<dbReference type="RefSeq" id="NP_999069.1">
    <property type="nucleotide sequence ID" value="NM_213904.1"/>
</dbReference>
<dbReference type="SMR" id="P79403"/>
<dbReference type="FunCoup" id="P79403">
    <property type="interactions" value="2588"/>
</dbReference>
<dbReference type="STRING" id="9823.ENSSSCP00000050032"/>
<dbReference type="CAZy" id="GH31">
    <property type="family name" value="Glycoside Hydrolase Family 31"/>
</dbReference>
<dbReference type="GlyCosmos" id="P79403">
    <property type="glycosylation" value="1 site, No reported glycans"/>
</dbReference>
<dbReference type="GlyGen" id="P79403">
    <property type="glycosylation" value="1 site"/>
</dbReference>
<dbReference type="PaxDb" id="9823-ENSSSCP00000025647"/>
<dbReference type="PeptideAtlas" id="P79403"/>
<dbReference type="GeneID" id="396938"/>
<dbReference type="KEGG" id="ssc:396938"/>
<dbReference type="CTD" id="23193"/>
<dbReference type="eggNOG" id="KOG1066">
    <property type="taxonomic scope" value="Eukaryota"/>
</dbReference>
<dbReference type="InParanoid" id="P79403"/>
<dbReference type="OrthoDB" id="3237269at2759"/>
<dbReference type="UniPathway" id="UPA00957"/>
<dbReference type="Proteomes" id="UP000008227">
    <property type="component" value="Unplaced"/>
</dbReference>
<dbReference type="Proteomes" id="UP000314985">
    <property type="component" value="Unplaced"/>
</dbReference>
<dbReference type="Proteomes" id="UP000694570">
    <property type="component" value="Unplaced"/>
</dbReference>
<dbReference type="Proteomes" id="UP000694571">
    <property type="component" value="Unplaced"/>
</dbReference>
<dbReference type="Proteomes" id="UP000694720">
    <property type="component" value="Unplaced"/>
</dbReference>
<dbReference type="Proteomes" id="UP000694722">
    <property type="component" value="Unplaced"/>
</dbReference>
<dbReference type="Proteomes" id="UP000694723">
    <property type="component" value="Unplaced"/>
</dbReference>
<dbReference type="Proteomes" id="UP000694724">
    <property type="component" value="Unplaced"/>
</dbReference>
<dbReference type="Proteomes" id="UP000694725">
    <property type="component" value="Unplaced"/>
</dbReference>
<dbReference type="Proteomes" id="UP000694726">
    <property type="component" value="Unplaced"/>
</dbReference>
<dbReference type="Proteomes" id="UP000694727">
    <property type="component" value="Unplaced"/>
</dbReference>
<dbReference type="Proteomes" id="UP000694728">
    <property type="component" value="Unplaced"/>
</dbReference>
<dbReference type="GO" id="GO:0017177">
    <property type="term" value="C:glucosidase II complex"/>
    <property type="evidence" value="ECO:0000250"/>
    <property type="project" value="UniProtKB"/>
</dbReference>
<dbReference type="GO" id="GO:0005794">
    <property type="term" value="C:Golgi apparatus"/>
    <property type="evidence" value="ECO:0007669"/>
    <property type="project" value="UniProtKB-SubCell"/>
</dbReference>
<dbReference type="GO" id="GO:0043231">
    <property type="term" value="C:intracellular membrane-bounded organelle"/>
    <property type="evidence" value="ECO:0000250"/>
    <property type="project" value="UniProtKB"/>
</dbReference>
<dbReference type="GO" id="GO:0042470">
    <property type="term" value="C:melanosome"/>
    <property type="evidence" value="ECO:0007669"/>
    <property type="project" value="UniProtKB-SubCell"/>
</dbReference>
<dbReference type="GO" id="GO:0090599">
    <property type="term" value="F:alpha-glucosidase activity"/>
    <property type="evidence" value="ECO:0000250"/>
    <property type="project" value="UniProtKB"/>
</dbReference>
<dbReference type="GO" id="GO:0030246">
    <property type="term" value="F:carbohydrate binding"/>
    <property type="evidence" value="ECO:0007669"/>
    <property type="project" value="InterPro"/>
</dbReference>
<dbReference type="GO" id="GO:0106407">
    <property type="term" value="F:Glc2Man9GlcNAc2 oligosaccharide glucosidase activity"/>
    <property type="evidence" value="ECO:0007669"/>
    <property type="project" value="UniProtKB-EC"/>
</dbReference>
<dbReference type="GO" id="GO:0033919">
    <property type="term" value="F:glucan 1,3-alpha-glucosidase activity"/>
    <property type="evidence" value="ECO:0000250"/>
    <property type="project" value="UniProtKB"/>
</dbReference>
<dbReference type="GO" id="GO:0005975">
    <property type="term" value="P:carbohydrate metabolic process"/>
    <property type="evidence" value="ECO:0007669"/>
    <property type="project" value="InterPro"/>
</dbReference>
<dbReference type="GO" id="GO:0006491">
    <property type="term" value="P:N-glycan processing"/>
    <property type="evidence" value="ECO:0000250"/>
    <property type="project" value="UniProtKB"/>
</dbReference>
<dbReference type="CDD" id="cd06603">
    <property type="entry name" value="GH31_GANC_GANAB_alpha"/>
    <property type="match status" value="1"/>
</dbReference>
<dbReference type="CDD" id="cd14752">
    <property type="entry name" value="GH31_N"/>
    <property type="match status" value="1"/>
</dbReference>
<dbReference type="FunFam" id="3.20.20.80:FF:000046">
    <property type="entry name" value="Glucosidase alpha, neutral C"/>
    <property type="match status" value="1"/>
</dbReference>
<dbReference type="FunFam" id="3.20.20.80:FF:000039">
    <property type="entry name" value="Glucosidase, alpha neutral C"/>
    <property type="match status" value="1"/>
</dbReference>
<dbReference type="FunFam" id="2.60.40.1180:FF:000004">
    <property type="entry name" value="neutral alpha-glucosidase AB isoform X1"/>
    <property type="match status" value="1"/>
</dbReference>
<dbReference type="FunFam" id="2.60.40.1760:FF:000002">
    <property type="entry name" value="neutral alpha-glucosidase AB isoform X1"/>
    <property type="match status" value="1"/>
</dbReference>
<dbReference type="FunFam" id="2.60.40.1180:FF:000023">
    <property type="entry name" value="neutral alpha-glucosidase AB isoform X2"/>
    <property type="match status" value="1"/>
</dbReference>
<dbReference type="Gene3D" id="3.20.20.80">
    <property type="entry name" value="Glycosidases"/>
    <property type="match status" value="1"/>
</dbReference>
<dbReference type="Gene3D" id="2.60.40.1760">
    <property type="entry name" value="glycosyl hydrolase (family 31)"/>
    <property type="match status" value="1"/>
</dbReference>
<dbReference type="Gene3D" id="2.60.40.1180">
    <property type="entry name" value="Golgi alpha-mannosidase II"/>
    <property type="match status" value="2"/>
</dbReference>
<dbReference type="InterPro" id="IPR011013">
    <property type="entry name" value="Gal_mutarotase_sf_dom"/>
</dbReference>
<dbReference type="InterPro" id="IPR030458">
    <property type="entry name" value="Glyco_hydro_31_AS"/>
</dbReference>
<dbReference type="InterPro" id="IPR048395">
    <property type="entry name" value="Glyco_hydro_31_C"/>
</dbReference>
<dbReference type="InterPro" id="IPR030459">
    <property type="entry name" value="Glyco_hydro_31_CS"/>
</dbReference>
<dbReference type="InterPro" id="IPR025887">
    <property type="entry name" value="Glyco_hydro_31_N_dom"/>
</dbReference>
<dbReference type="InterPro" id="IPR000322">
    <property type="entry name" value="Glyco_hydro_31_TIM"/>
</dbReference>
<dbReference type="InterPro" id="IPR013780">
    <property type="entry name" value="Glyco_hydro_b"/>
</dbReference>
<dbReference type="InterPro" id="IPR017853">
    <property type="entry name" value="Glycoside_hydrolase_SF"/>
</dbReference>
<dbReference type="PANTHER" id="PTHR22762">
    <property type="entry name" value="ALPHA-GLUCOSIDASE"/>
    <property type="match status" value="1"/>
</dbReference>
<dbReference type="PANTHER" id="PTHR22762:SF162">
    <property type="entry name" value="NEUTRAL ALPHA-GLUCOSIDASE AB"/>
    <property type="match status" value="1"/>
</dbReference>
<dbReference type="Pfam" id="PF13802">
    <property type="entry name" value="Gal_mutarotas_2"/>
    <property type="match status" value="1"/>
</dbReference>
<dbReference type="Pfam" id="PF01055">
    <property type="entry name" value="Glyco_hydro_31_2nd"/>
    <property type="match status" value="1"/>
</dbReference>
<dbReference type="Pfam" id="PF21365">
    <property type="entry name" value="Glyco_hydro_31_3rd"/>
    <property type="match status" value="1"/>
</dbReference>
<dbReference type="SUPFAM" id="SSF51445">
    <property type="entry name" value="(Trans)glycosidases"/>
    <property type="match status" value="1"/>
</dbReference>
<dbReference type="SUPFAM" id="SSF74650">
    <property type="entry name" value="Galactose mutarotase-like"/>
    <property type="match status" value="1"/>
</dbReference>
<dbReference type="SUPFAM" id="SSF51011">
    <property type="entry name" value="Glycosyl hydrolase domain"/>
    <property type="match status" value="1"/>
</dbReference>
<dbReference type="PROSITE" id="PS00129">
    <property type="entry name" value="GLYCOSYL_HYDROL_F31_1"/>
    <property type="match status" value="1"/>
</dbReference>
<dbReference type="PROSITE" id="PS00707">
    <property type="entry name" value="GLYCOSYL_HYDROL_F31_2"/>
    <property type="match status" value="1"/>
</dbReference>
<accession>P79403</accession>
<protein>
    <recommendedName>
        <fullName>Neutral alpha-glucosidase AB</fullName>
        <ecNumber evidence="3">3.2.1.207</ecNumber>
    </recommendedName>
    <alternativeName>
        <fullName>Alpha-glucosidase 2</fullName>
    </alternativeName>
    <alternativeName>
        <fullName>Glucosidase II subunit alpha</fullName>
    </alternativeName>
</protein>
<feature type="signal peptide" evidence="1">
    <location>
        <begin position="1"/>
        <end position="32"/>
    </location>
</feature>
<feature type="chain" id="PRO_0000018573" description="Neutral alpha-glucosidase AB">
    <location>
        <begin position="33"/>
        <end position="944"/>
    </location>
</feature>
<feature type="region of interest" description="Disordered" evidence="6">
    <location>
        <begin position="181"/>
        <end position="225"/>
    </location>
</feature>
<feature type="compositionally biased region" description="Basic and acidic residues" evidence="6">
    <location>
        <begin position="207"/>
        <end position="225"/>
    </location>
</feature>
<feature type="active site" description="Nucleophile" evidence="5">
    <location>
        <position position="542"/>
    </location>
</feature>
<feature type="active site" description="Proton donor" evidence="3">
    <location>
        <position position="618"/>
    </location>
</feature>
<feature type="binding site" evidence="3">
    <location>
        <position position="283"/>
    </location>
    <ligand>
        <name>substrate</name>
    </ligand>
</feature>
<feature type="binding site" evidence="3">
    <location>
        <position position="429"/>
    </location>
    <ligand>
        <name>substrate</name>
    </ligand>
</feature>
<feature type="binding site" evidence="3">
    <location>
        <position position="602"/>
    </location>
    <ligand>
        <name>substrate</name>
    </ligand>
</feature>
<feature type="binding site" evidence="3">
    <location>
        <position position="676"/>
    </location>
    <ligand>
        <name>substrate</name>
    </ligand>
</feature>
<feature type="modified residue" description="Phosphoserine" evidence="2">
    <location>
        <position position="52"/>
    </location>
</feature>
<feature type="glycosylation site" description="N-linked (GlcNAc...) asparagine" evidence="4">
    <location>
        <position position="97"/>
    </location>
</feature>
<feature type="disulfide bond" evidence="3">
    <location>
        <begin position="41"/>
        <end position="47"/>
    </location>
</feature>
<feature type="disulfide bond" evidence="3">
    <location>
        <begin position="633"/>
        <end position="644"/>
    </location>
</feature>
<reference key="1">
    <citation type="submission" date="1996-09" db="EMBL/GenBank/DDBJ databases">
        <authorList>
            <person name="Flura T."/>
            <person name="Brada D."/>
            <person name="Ziak M."/>
            <person name="Roth J."/>
        </authorList>
    </citation>
    <scope>NUCLEOTIDE SEQUENCE [MRNA]</scope>
    <source>
        <tissue>Liver</tissue>
    </source>
</reference>
<reference key="2">
    <citation type="journal article" date="1990" name="J. Cell Biol.">
        <title>Cell type-specific post-Golgi apparatus localization of a 'resident' endoplasmic reticulum glycoprotein, glucosidase II.</title>
        <authorList>
            <person name="Brada D."/>
            <person name="Kerjaschki D."/>
            <person name="Roth J."/>
        </authorList>
    </citation>
    <scope>SUBCELLULAR LOCATION</scope>
    <scope>GLYCOSYLATION</scope>
    <scope>SIALIC ACID CONTENT</scope>
</reference>
<gene>
    <name type="primary">GANAB</name>
</gene>
<sequence length="944" mass="106662">MAAVAAVAARRRRSWTGLVLACLGVCLGLTLAVDRSNFKTCEESSFCKRQRSIRPGQSPYRALLDSLQLGPDTLTIHLINEVTKVLLVLELQGLQKNMTRIRIDELEPRRPRYRVPDVLVAEPPTARLSVSGQDDNSVEVTVAEGPYKIILTARPFRLDLLEDRSLLLSVNARGLLNFEHQRAPRVSQGSKDPAEGDGAQPEEAPGDGDKPEEIQGKAEKDEPGAWEETFKTHSDSKPYGPTSVGLDFSLPGMEHVYGIPEHADSLRLKVTEGGDPYRLYNLDVFQYELYNPMALYGSVPVLLAHSPHRDLGIFWLNAAETWVDISSNTAGKTLFGKMLDYLQGSGETPQTDVRWMSESGIIDVFLLLGPSVFDVFRQYASLTGTQALPPLFSLGYHQSRWNYRDEADVLEVNQGFDDHNLPCDFIWLDIEHADGKRYFTWDPSRFPQPRTMLEHLASKRRKLVAIVDPHIKVDSSYRVHEELQNLGLYVKTRDGSDYEGWCWPGAASYPDFTNPKMRAWWADMFRFENYEGSSSNLYVWNDMNEPSVFNGPEVTMLKDAQHYGGWEHRDLHNIYGFYVHMATADGLVLRSGGVERPFVLSRAFFAGSQRFGAVWTGDNTAEWDHLKISIPMCLSLGLVGVSFCGADVGGFFKNPEPELLVRWYQMGAYQPFFRAHAHLDTGRREPWLLPTQYQDMIRDALGQRYSLLPFWYTLFYQAHREGVPVMRALWVHYPQDVTTFSIDDEFLLGDALLVHPVTDSEAHGVQVYLPGQGEVWYDVHSYQKYHGPQTLYLPVTLSSIPVFQRGGTIVPRWMRVRRSSDCMKDDPITLFVALSPQGTAQGELFLDDGHTFNYQTGHEFLLRRFSFSGNTLVSSSADSKGHFETPVWIERVVIIGAGKPATVVLQTKGSPESRLSFQHDPETSVLILRKPGVNVASDWSIHLR</sequence>